<accession>P46663</accession>
<accession>A8K7F5</accession>
<accession>Q546S7</accession>
<accession>Q8N0Y8</accession>
<sequence>MASSWPPLELQSSNQSQLFPQNATACDNAPEAWDLLHRVLPTFIISICFFGLLGNLFVLLVFLLPRRQLNVAEIYLANLAASDLVFVLGLPFWAENIWNQFNWPFGALLCRVINGVIKANLFISIFLVVAISQDRYRVLVHPMASRRQQRRRQARVTCVLIWVVGGLLSIPTFLLRSIQAVPDLNITACILLLPHEAWHFARIVELNILGFLLPLAAIVFFNYHILASLRTREEVSRTRCGGRKDSKTTALILTLVVAFLVCWAPYHFFAFLEFLFQVQAVRGCFWEDFIDLGLQLANFFAFTNSSLNPVIYVFVGRLFRTKVWELYKQCTPKSLAPISSSHRKEIFQLFWRN</sequence>
<evidence type="ECO:0000255" key="1"/>
<evidence type="ECO:0000255" key="2">
    <source>
        <dbReference type="PROSITE-ProRule" id="PRU00521"/>
    </source>
</evidence>
<evidence type="ECO:0000269" key="3">
    <source>
    </source>
</evidence>
<evidence type="ECO:0000269" key="4">
    <source>
    </source>
</evidence>
<evidence type="ECO:0000305" key="5"/>
<evidence type="ECO:0000305" key="6">
    <source>
    </source>
</evidence>
<evidence type="ECO:0007829" key="7">
    <source>
        <dbReference type="PDB" id="7EIB"/>
    </source>
</evidence>
<dbReference type="EMBL" id="U12512">
    <property type="protein sequence ID" value="AAA21346.1"/>
    <property type="molecule type" value="mRNA"/>
</dbReference>
<dbReference type="EMBL" id="U22346">
    <property type="protein sequence ID" value="AAC50594.1"/>
    <property type="molecule type" value="Genomic_DNA"/>
</dbReference>
<dbReference type="EMBL" id="U48231">
    <property type="protein sequence ID" value="AAB60693.1"/>
    <property type="molecule type" value="Genomic_DNA"/>
</dbReference>
<dbReference type="EMBL" id="AJ238044">
    <property type="protein sequence ID" value="CAB45650.1"/>
    <property type="molecule type" value="mRNA"/>
</dbReference>
<dbReference type="EMBL" id="AB065896">
    <property type="protein sequence ID" value="BAC06112.1"/>
    <property type="molecule type" value="Genomic_DNA"/>
</dbReference>
<dbReference type="EMBL" id="AY275464">
    <property type="protein sequence ID" value="AAP32296.1"/>
    <property type="molecule type" value="Genomic_DNA"/>
</dbReference>
<dbReference type="EMBL" id="AK291970">
    <property type="protein sequence ID" value="BAF84659.1"/>
    <property type="molecule type" value="mRNA"/>
</dbReference>
<dbReference type="EMBL" id="CH471061">
    <property type="protein sequence ID" value="EAW81632.1"/>
    <property type="molecule type" value="Genomic_DNA"/>
</dbReference>
<dbReference type="EMBL" id="BC034705">
    <property type="protein sequence ID" value="AAH34705.1"/>
    <property type="molecule type" value="mRNA"/>
</dbReference>
<dbReference type="CCDS" id="CCDS9943.1"/>
<dbReference type="PIR" id="A53858">
    <property type="entry name" value="A53858"/>
</dbReference>
<dbReference type="RefSeq" id="NP_000701.2">
    <property type="nucleotide sequence ID" value="NM_000710.3"/>
</dbReference>
<dbReference type="RefSeq" id="NP_001372936.1">
    <property type="nucleotide sequence ID" value="NM_001386007.1"/>
</dbReference>
<dbReference type="PDB" id="7EIB">
    <property type="method" value="EM"/>
    <property type="resolution" value="3.00 A"/>
    <property type="chains" value="A=2-350"/>
</dbReference>
<dbReference type="PDBsum" id="7EIB"/>
<dbReference type="EMDB" id="EMD-31145"/>
<dbReference type="SMR" id="P46663"/>
<dbReference type="BioGRID" id="107092">
    <property type="interactions" value="32"/>
</dbReference>
<dbReference type="CORUM" id="P46663"/>
<dbReference type="FunCoup" id="P46663">
    <property type="interactions" value="1000"/>
</dbReference>
<dbReference type="IntAct" id="P46663">
    <property type="interactions" value="32"/>
</dbReference>
<dbReference type="MINT" id="P46663"/>
<dbReference type="STRING" id="9606.ENSP00000216629"/>
<dbReference type="BindingDB" id="P46663"/>
<dbReference type="ChEMBL" id="CHEMBL4308"/>
<dbReference type="DrugBank" id="DB01197">
    <property type="generic name" value="Captopril"/>
</dbReference>
<dbReference type="DrugBank" id="DB09477">
    <property type="generic name" value="Enalaprilat"/>
</dbReference>
<dbReference type="DrugBank" id="DB00178">
    <property type="generic name" value="Ramipril"/>
</dbReference>
<dbReference type="DrugBank" id="DB01593">
    <property type="generic name" value="Zinc"/>
</dbReference>
<dbReference type="DrugBank" id="DB14487">
    <property type="generic name" value="Zinc acetate"/>
</dbReference>
<dbReference type="DrugBank" id="DB14533">
    <property type="generic name" value="Zinc chloride"/>
</dbReference>
<dbReference type="DrugBank" id="DB14548">
    <property type="generic name" value="Zinc sulfate, unspecified form"/>
</dbReference>
<dbReference type="DrugCentral" id="P46663"/>
<dbReference type="GuidetoPHARMACOLOGY" id="41"/>
<dbReference type="GlyCosmos" id="P46663">
    <property type="glycosylation" value="3 sites, No reported glycans"/>
</dbReference>
<dbReference type="GlyGen" id="P46663">
    <property type="glycosylation" value="3 sites"/>
</dbReference>
<dbReference type="iPTMnet" id="P46663"/>
<dbReference type="PhosphoSitePlus" id="P46663"/>
<dbReference type="BioMuta" id="BDKRB1"/>
<dbReference type="DMDM" id="85681914"/>
<dbReference type="PaxDb" id="9606-ENSP00000216629"/>
<dbReference type="PeptideAtlas" id="P46663"/>
<dbReference type="ProteomicsDB" id="55746"/>
<dbReference type="Antibodypedia" id="153">
    <property type="antibodies" value="316 antibodies from 35 providers"/>
</dbReference>
<dbReference type="DNASU" id="623"/>
<dbReference type="Ensembl" id="ENST00000216629.11">
    <property type="protein sequence ID" value="ENSP00000216629.6"/>
    <property type="gene ID" value="ENSG00000100739.11"/>
</dbReference>
<dbReference type="Ensembl" id="ENST00000611804.1">
    <property type="protein sequence ID" value="ENSP00000479276.1"/>
    <property type="gene ID" value="ENSG00000100739.11"/>
</dbReference>
<dbReference type="GeneID" id="623"/>
<dbReference type="KEGG" id="hsa:623"/>
<dbReference type="MANE-Select" id="ENST00000216629.11">
    <property type="protein sequence ID" value="ENSP00000216629.6"/>
    <property type="RefSeq nucleotide sequence ID" value="NM_000710.4"/>
    <property type="RefSeq protein sequence ID" value="NP_000701.2"/>
</dbReference>
<dbReference type="UCSC" id="uc001yfh.4">
    <property type="organism name" value="human"/>
</dbReference>
<dbReference type="AGR" id="HGNC:1029"/>
<dbReference type="CTD" id="623"/>
<dbReference type="DisGeNET" id="623"/>
<dbReference type="GeneCards" id="BDKRB1"/>
<dbReference type="HGNC" id="HGNC:1029">
    <property type="gene designation" value="BDKRB1"/>
</dbReference>
<dbReference type="HPA" id="ENSG00000100739">
    <property type="expression patterns" value="Tissue enhanced (urinary)"/>
</dbReference>
<dbReference type="MIM" id="600337">
    <property type="type" value="gene"/>
</dbReference>
<dbReference type="neXtProt" id="NX_P46663"/>
<dbReference type="OpenTargets" id="ENSG00000100739"/>
<dbReference type="PharmGKB" id="PA79"/>
<dbReference type="VEuPathDB" id="HostDB:ENSG00000100739"/>
<dbReference type="eggNOG" id="KOG3656">
    <property type="taxonomic scope" value="Eukaryota"/>
</dbReference>
<dbReference type="GeneTree" id="ENSGT01130000278308"/>
<dbReference type="InParanoid" id="P46663"/>
<dbReference type="OMA" id="GCFWEEL"/>
<dbReference type="OrthoDB" id="6076970at2759"/>
<dbReference type="PAN-GO" id="P46663">
    <property type="GO annotations" value="3 GO annotations based on evolutionary models"/>
</dbReference>
<dbReference type="PhylomeDB" id="P46663"/>
<dbReference type="TreeFam" id="TF330024"/>
<dbReference type="PathwayCommons" id="P46663"/>
<dbReference type="Reactome" id="R-HSA-375276">
    <property type="pathway name" value="Peptide ligand-binding receptors"/>
</dbReference>
<dbReference type="Reactome" id="R-HSA-416476">
    <property type="pathway name" value="G alpha (q) signalling events"/>
</dbReference>
<dbReference type="Reactome" id="R-HSA-418594">
    <property type="pathway name" value="G alpha (i) signalling events"/>
</dbReference>
<dbReference type="SignaLink" id="P46663"/>
<dbReference type="SIGNOR" id="P46663"/>
<dbReference type="BioGRID-ORCS" id="623">
    <property type="hits" value="11 hits in 1148 CRISPR screens"/>
</dbReference>
<dbReference type="ChiTaRS" id="BDKRB1">
    <property type="organism name" value="human"/>
</dbReference>
<dbReference type="GeneWiki" id="Bradykinin_receptor_B1"/>
<dbReference type="GenomeRNAi" id="623"/>
<dbReference type="Pharos" id="P46663">
    <property type="development level" value="Tchem"/>
</dbReference>
<dbReference type="PRO" id="PR:P46663"/>
<dbReference type="Proteomes" id="UP000005640">
    <property type="component" value="Chromosome 14"/>
</dbReference>
<dbReference type="RNAct" id="P46663">
    <property type="molecule type" value="protein"/>
</dbReference>
<dbReference type="Bgee" id="ENSG00000100739">
    <property type="expression patterns" value="Expressed in primordial germ cell in gonad and 88 other cell types or tissues"/>
</dbReference>
<dbReference type="ExpressionAtlas" id="P46663">
    <property type="expression patterns" value="baseline and differential"/>
</dbReference>
<dbReference type="GO" id="GO:0005783">
    <property type="term" value="C:endoplasmic reticulum"/>
    <property type="evidence" value="ECO:0000304"/>
    <property type="project" value="ProtInc"/>
</dbReference>
<dbReference type="GO" id="GO:0005886">
    <property type="term" value="C:plasma membrane"/>
    <property type="evidence" value="ECO:0000318"/>
    <property type="project" value="GO_Central"/>
</dbReference>
<dbReference type="GO" id="GO:0004947">
    <property type="term" value="F:bradykinin receptor activity"/>
    <property type="evidence" value="ECO:0000314"/>
    <property type="project" value="UniProtKB"/>
</dbReference>
<dbReference type="GO" id="GO:0042277">
    <property type="term" value="F:peptide binding"/>
    <property type="evidence" value="ECO:0007669"/>
    <property type="project" value="Ensembl"/>
</dbReference>
<dbReference type="GO" id="GO:0016477">
    <property type="term" value="P:cell migration"/>
    <property type="evidence" value="ECO:0007669"/>
    <property type="project" value="Ensembl"/>
</dbReference>
<dbReference type="GO" id="GO:0007186">
    <property type="term" value="P:G protein-coupled receptor signaling pathway"/>
    <property type="evidence" value="ECO:0000318"/>
    <property type="project" value="GO_Central"/>
</dbReference>
<dbReference type="GO" id="GO:0006954">
    <property type="term" value="P:inflammatory response"/>
    <property type="evidence" value="ECO:0007669"/>
    <property type="project" value="InterPro"/>
</dbReference>
<dbReference type="GO" id="GO:0045776">
    <property type="term" value="P:negative regulation of blood pressure"/>
    <property type="evidence" value="ECO:0007669"/>
    <property type="project" value="Ensembl"/>
</dbReference>
<dbReference type="GO" id="GO:0030308">
    <property type="term" value="P:negative regulation of cell growth"/>
    <property type="evidence" value="ECO:0007669"/>
    <property type="project" value="Ensembl"/>
</dbReference>
<dbReference type="GO" id="GO:0007204">
    <property type="term" value="P:positive regulation of cytosolic calcium ion concentration"/>
    <property type="evidence" value="ECO:0000304"/>
    <property type="project" value="ProtInc"/>
</dbReference>
<dbReference type="GO" id="GO:0002687">
    <property type="term" value="P:positive regulation of leukocyte migration"/>
    <property type="evidence" value="ECO:0007669"/>
    <property type="project" value="Ensembl"/>
</dbReference>
<dbReference type="GO" id="GO:0051281">
    <property type="term" value="P:positive regulation of release of sequestered calcium ion into cytosol"/>
    <property type="evidence" value="ECO:0007669"/>
    <property type="project" value="Ensembl"/>
</dbReference>
<dbReference type="GO" id="GO:0032496">
    <property type="term" value="P:response to lipopolysaccharide"/>
    <property type="evidence" value="ECO:0007669"/>
    <property type="project" value="Ensembl"/>
</dbReference>
<dbReference type="GO" id="GO:0009612">
    <property type="term" value="P:response to mechanical stimulus"/>
    <property type="evidence" value="ECO:0007669"/>
    <property type="project" value="InterPro"/>
</dbReference>
<dbReference type="CDD" id="cd15380">
    <property type="entry name" value="7tmA_BK-1"/>
    <property type="match status" value="1"/>
</dbReference>
<dbReference type="FunFam" id="1.20.1070.10:FF:000295">
    <property type="entry name" value="B1 bradykinin receptor"/>
    <property type="match status" value="1"/>
</dbReference>
<dbReference type="Gene3D" id="1.20.1070.10">
    <property type="entry name" value="Rhodopsin 7-helix transmembrane proteins"/>
    <property type="match status" value="1"/>
</dbReference>
<dbReference type="InterPro" id="IPR001186">
    <property type="entry name" value="Brdyknn_1_rcpt"/>
</dbReference>
<dbReference type="InterPro" id="IPR000496">
    <property type="entry name" value="Brdyknn_rcpt"/>
</dbReference>
<dbReference type="InterPro" id="IPR050119">
    <property type="entry name" value="CCR1-9-like"/>
</dbReference>
<dbReference type="InterPro" id="IPR000276">
    <property type="entry name" value="GPCR_Rhodpsn"/>
</dbReference>
<dbReference type="InterPro" id="IPR017452">
    <property type="entry name" value="GPCR_Rhodpsn_7TM"/>
</dbReference>
<dbReference type="PANTHER" id="PTHR10489:SF957">
    <property type="entry name" value="B2 BRADYKININ RECEPTOR"/>
    <property type="match status" value="1"/>
</dbReference>
<dbReference type="PANTHER" id="PTHR10489">
    <property type="entry name" value="CELL ADHESION MOLECULE"/>
    <property type="match status" value="1"/>
</dbReference>
<dbReference type="Pfam" id="PF00001">
    <property type="entry name" value="7tm_1"/>
    <property type="match status" value="1"/>
</dbReference>
<dbReference type="PRINTS" id="PR00425">
    <property type="entry name" value="BRADYKININR"/>
</dbReference>
<dbReference type="PRINTS" id="PR00993">
    <property type="entry name" value="BRADYKINNB1R"/>
</dbReference>
<dbReference type="PRINTS" id="PR00237">
    <property type="entry name" value="GPCRRHODOPSN"/>
</dbReference>
<dbReference type="SUPFAM" id="SSF81321">
    <property type="entry name" value="Family A G protein-coupled receptor-like"/>
    <property type="match status" value="1"/>
</dbReference>
<dbReference type="PROSITE" id="PS50262">
    <property type="entry name" value="G_PROTEIN_RECEP_F1_2"/>
    <property type="match status" value="1"/>
</dbReference>
<protein>
    <recommendedName>
        <fullName>B1 bradykinin receptor</fullName>
        <shortName>B1R</shortName>
        <shortName>BK-1 receptor</shortName>
    </recommendedName>
</protein>
<comment type="function">
    <text evidence="3 4">This is a receptor for bradykinin. Could be a factor in chronic pain and inflammation.</text>
</comment>
<comment type="interaction">
    <interactant intactId="EBI-6623218">
        <id>P46663</id>
    </interactant>
    <interactant intactId="EBI-6623250">
        <id>PRO_0000006687</id>
        <label>KNG1</label>
        <dbReference type="UniProtKB" id="P01042"/>
    </interactant>
    <organismsDiffer>false</organismsDiffer>
    <experiments>2</experiments>
</comment>
<comment type="subcellular location">
    <subcellularLocation>
        <location evidence="6">Cell membrane</location>
        <topology evidence="1">Multi-pass membrane protein</topology>
    </subcellularLocation>
</comment>
<comment type="similarity">
    <text evidence="2">Belongs to the G-protein coupled receptor 1 family. Bradykinin receptor subfamily. BDKRB1 sub-subfamily.</text>
</comment>
<comment type="online information" name="Wikipedia">
    <link uri="https://en.wikipedia.org/wiki/Bradykinin_receptor"/>
    <text>Bradykinin receptor entry</text>
</comment>
<name>BKRB1_HUMAN</name>
<proteinExistence type="evidence at protein level"/>
<keyword id="KW-0002">3D-structure</keyword>
<keyword id="KW-1003">Cell membrane</keyword>
<keyword id="KW-1015">Disulfide bond</keyword>
<keyword id="KW-0297">G-protein coupled receptor</keyword>
<keyword id="KW-0325">Glycoprotein</keyword>
<keyword id="KW-0449">Lipoprotein</keyword>
<keyword id="KW-0472">Membrane</keyword>
<keyword id="KW-0564">Palmitate</keyword>
<keyword id="KW-0675">Receptor</keyword>
<keyword id="KW-1185">Reference proteome</keyword>
<keyword id="KW-0807">Transducer</keyword>
<keyword id="KW-0812">Transmembrane</keyword>
<keyword id="KW-1133">Transmembrane helix</keyword>
<reference key="1">
    <citation type="journal article" date="1994" name="J. Biol. Chem.">
        <title>Expression cloning of a human B1 bradykinin receptor.</title>
        <authorList>
            <person name="Menke J.G."/>
            <person name="Borkowski J.A."/>
            <person name="Bierilo K.K."/>
            <person name="Macneil T."/>
            <person name="Derrick A.W."/>
            <person name="Schneck K.A."/>
            <person name="Ransom R.W."/>
            <person name="Strader C.D."/>
            <person name="Linemeyer D.L."/>
            <person name="Hess J.F."/>
        </authorList>
    </citation>
    <scope>NUCLEOTIDE SEQUENCE [MRNA]</scope>
    <scope>FUNCTION</scope>
</reference>
<reference key="2">
    <citation type="journal article" date="1996" name="Biochem. Biophys. Res. Commun.">
        <title>Genomic structure of the human bradykinin B1 receptor gene and preliminary characterization of its regulatory regions.</title>
        <authorList>
            <person name="Yang X."/>
            <person name="Polgar P."/>
        </authorList>
    </citation>
    <scope>NUCLEOTIDE SEQUENCE [GENOMIC DNA]</scope>
</reference>
<reference key="3">
    <citation type="journal article" date="1996" name="Genomics">
        <title>Structure and genomic organization of the human B1 receptor gene for kinins (BDKRB1).</title>
        <authorList>
            <person name="Bachvarov D.R."/>
            <person name="Hess J.F."/>
            <person name="Menke J.G."/>
            <person name="Larrivee J.F."/>
            <person name="Marceau F."/>
        </authorList>
    </citation>
    <scope>NUCLEOTIDE SEQUENCE [GENOMIC DNA]</scope>
</reference>
<reference key="4">
    <citation type="journal article" date="1999" name="Eur. J. Pharmacol.">
        <title>Molecular characterisation of cloned bradykinin B1 receptors from rat and human.</title>
        <authorList>
            <person name="Jones C."/>
            <person name="Phillips E."/>
            <person name="Davis C."/>
            <person name="Arbuckle J."/>
            <person name="Yaqoob M."/>
            <person name="Burgess G.M."/>
            <person name="Docherty R.J."/>
            <person name="Webb M."/>
            <person name="Bevan S.J."/>
            <person name="McIntyre P."/>
        </authorList>
    </citation>
    <scope>NUCLEOTIDE SEQUENCE [MRNA]</scope>
    <scope>FUNCTION</scope>
    <source>
        <tissue>Lung</tissue>
    </source>
</reference>
<reference key="5">
    <citation type="submission" date="2001-07" db="EMBL/GenBank/DDBJ databases">
        <title>Genome-wide discovery and analysis of human seven transmembrane helix receptor genes.</title>
        <authorList>
            <person name="Suwa M."/>
            <person name="Sato T."/>
            <person name="Okouchi I."/>
            <person name="Arita M."/>
            <person name="Futami K."/>
            <person name="Matsumoto S."/>
            <person name="Tsutsumi S."/>
            <person name="Aburatani H."/>
            <person name="Asai K."/>
            <person name="Akiyama Y."/>
        </authorList>
    </citation>
    <scope>NUCLEOTIDE SEQUENCE [GENOMIC DNA]</scope>
</reference>
<reference key="6">
    <citation type="submission" date="2003-04" db="EMBL/GenBank/DDBJ databases">
        <title>Isolation of complete coding sequence for bradykinin receptor B1 (BDKRB1).</title>
        <authorList>
            <person name="Warren C.N."/>
            <person name="Aronstam R.S."/>
            <person name="Sharma S.V."/>
        </authorList>
    </citation>
    <scope>NUCLEOTIDE SEQUENCE [GENOMIC DNA]</scope>
</reference>
<reference key="7">
    <citation type="journal article" date="2004" name="Nat. Genet.">
        <title>Complete sequencing and characterization of 21,243 full-length human cDNAs.</title>
        <authorList>
            <person name="Ota T."/>
            <person name="Suzuki Y."/>
            <person name="Nishikawa T."/>
            <person name="Otsuki T."/>
            <person name="Sugiyama T."/>
            <person name="Irie R."/>
            <person name="Wakamatsu A."/>
            <person name="Hayashi K."/>
            <person name="Sato H."/>
            <person name="Nagai K."/>
            <person name="Kimura K."/>
            <person name="Makita H."/>
            <person name="Sekine M."/>
            <person name="Obayashi M."/>
            <person name="Nishi T."/>
            <person name="Shibahara T."/>
            <person name="Tanaka T."/>
            <person name="Ishii S."/>
            <person name="Yamamoto J."/>
            <person name="Saito K."/>
            <person name="Kawai Y."/>
            <person name="Isono Y."/>
            <person name="Nakamura Y."/>
            <person name="Nagahari K."/>
            <person name="Murakami K."/>
            <person name="Yasuda T."/>
            <person name="Iwayanagi T."/>
            <person name="Wagatsuma M."/>
            <person name="Shiratori A."/>
            <person name="Sudo H."/>
            <person name="Hosoiri T."/>
            <person name="Kaku Y."/>
            <person name="Kodaira H."/>
            <person name="Kondo H."/>
            <person name="Sugawara M."/>
            <person name="Takahashi M."/>
            <person name="Kanda K."/>
            <person name="Yokoi T."/>
            <person name="Furuya T."/>
            <person name="Kikkawa E."/>
            <person name="Omura Y."/>
            <person name="Abe K."/>
            <person name="Kamihara K."/>
            <person name="Katsuta N."/>
            <person name="Sato K."/>
            <person name="Tanikawa M."/>
            <person name="Yamazaki M."/>
            <person name="Ninomiya K."/>
            <person name="Ishibashi T."/>
            <person name="Yamashita H."/>
            <person name="Murakawa K."/>
            <person name="Fujimori K."/>
            <person name="Tanai H."/>
            <person name="Kimata M."/>
            <person name="Watanabe M."/>
            <person name="Hiraoka S."/>
            <person name="Chiba Y."/>
            <person name="Ishida S."/>
            <person name="Ono Y."/>
            <person name="Takiguchi S."/>
            <person name="Watanabe S."/>
            <person name="Yosida M."/>
            <person name="Hotuta T."/>
            <person name="Kusano J."/>
            <person name="Kanehori K."/>
            <person name="Takahashi-Fujii A."/>
            <person name="Hara H."/>
            <person name="Tanase T.-O."/>
            <person name="Nomura Y."/>
            <person name="Togiya S."/>
            <person name="Komai F."/>
            <person name="Hara R."/>
            <person name="Takeuchi K."/>
            <person name="Arita M."/>
            <person name="Imose N."/>
            <person name="Musashino K."/>
            <person name="Yuuki H."/>
            <person name="Oshima A."/>
            <person name="Sasaki N."/>
            <person name="Aotsuka S."/>
            <person name="Yoshikawa Y."/>
            <person name="Matsunawa H."/>
            <person name="Ichihara T."/>
            <person name="Shiohata N."/>
            <person name="Sano S."/>
            <person name="Moriya S."/>
            <person name="Momiyama H."/>
            <person name="Satoh N."/>
            <person name="Takami S."/>
            <person name="Terashima Y."/>
            <person name="Suzuki O."/>
            <person name="Nakagawa S."/>
            <person name="Senoh A."/>
            <person name="Mizoguchi H."/>
            <person name="Goto Y."/>
            <person name="Shimizu F."/>
            <person name="Wakebe H."/>
            <person name="Hishigaki H."/>
            <person name="Watanabe T."/>
            <person name="Sugiyama A."/>
            <person name="Takemoto M."/>
            <person name="Kawakami B."/>
            <person name="Yamazaki M."/>
            <person name="Watanabe K."/>
            <person name="Kumagai A."/>
            <person name="Itakura S."/>
            <person name="Fukuzumi Y."/>
            <person name="Fujimori Y."/>
            <person name="Komiyama M."/>
            <person name="Tashiro H."/>
            <person name="Tanigami A."/>
            <person name="Fujiwara T."/>
            <person name="Ono T."/>
            <person name="Yamada K."/>
            <person name="Fujii Y."/>
            <person name="Ozaki K."/>
            <person name="Hirao M."/>
            <person name="Ohmori Y."/>
            <person name="Kawabata A."/>
            <person name="Hikiji T."/>
            <person name="Kobatake N."/>
            <person name="Inagaki H."/>
            <person name="Ikema Y."/>
            <person name="Okamoto S."/>
            <person name="Okitani R."/>
            <person name="Kawakami T."/>
            <person name="Noguchi S."/>
            <person name="Itoh T."/>
            <person name="Shigeta K."/>
            <person name="Senba T."/>
            <person name="Matsumura K."/>
            <person name="Nakajima Y."/>
            <person name="Mizuno T."/>
            <person name="Morinaga M."/>
            <person name="Sasaki M."/>
            <person name="Togashi T."/>
            <person name="Oyama M."/>
            <person name="Hata H."/>
            <person name="Watanabe M."/>
            <person name="Komatsu T."/>
            <person name="Mizushima-Sugano J."/>
            <person name="Satoh T."/>
            <person name="Shirai Y."/>
            <person name="Takahashi Y."/>
            <person name="Nakagawa K."/>
            <person name="Okumura K."/>
            <person name="Nagase T."/>
            <person name="Nomura N."/>
            <person name="Kikuchi H."/>
            <person name="Masuho Y."/>
            <person name="Yamashita R."/>
            <person name="Nakai K."/>
            <person name="Yada T."/>
            <person name="Nakamura Y."/>
            <person name="Ohara O."/>
            <person name="Isogai T."/>
            <person name="Sugano S."/>
        </authorList>
    </citation>
    <scope>NUCLEOTIDE SEQUENCE [LARGE SCALE MRNA]</scope>
</reference>
<reference key="8">
    <citation type="submission" date="2005-07" db="EMBL/GenBank/DDBJ databases">
        <authorList>
            <person name="Mural R.J."/>
            <person name="Istrail S."/>
            <person name="Sutton G.G."/>
            <person name="Florea L."/>
            <person name="Halpern A.L."/>
            <person name="Mobarry C.M."/>
            <person name="Lippert R."/>
            <person name="Walenz B."/>
            <person name="Shatkay H."/>
            <person name="Dew I."/>
            <person name="Miller J.R."/>
            <person name="Flanigan M.J."/>
            <person name="Edwards N.J."/>
            <person name="Bolanos R."/>
            <person name="Fasulo D."/>
            <person name="Halldorsson B.V."/>
            <person name="Hannenhalli S."/>
            <person name="Turner R."/>
            <person name="Yooseph S."/>
            <person name="Lu F."/>
            <person name="Nusskern D.R."/>
            <person name="Shue B.C."/>
            <person name="Zheng X.H."/>
            <person name="Zhong F."/>
            <person name="Delcher A.L."/>
            <person name="Huson D.H."/>
            <person name="Kravitz S.A."/>
            <person name="Mouchard L."/>
            <person name="Reinert K."/>
            <person name="Remington K.A."/>
            <person name="Clark A.G."/>
            <person name="Waterman M.S."/>
            <person name="Eichler E.E."/>
            <person name="Adams M.D."/>
            <person name="Hunkapiller M.W."/>
            <person name="Myers E.W."/>
            <person name="Venter J.C."/>
        </authorList>
    </citation>
    <scope>NUCLEOTIDE SEQUENCE [LARGE SCALE GENOMIC DNA]</scope>
</reference>
<reference key="9">
    <citation type="journal article" date="2004" name="Genome Res.">
        <title>The status, quality, and expansion of the NIH full-length cDNA project: the Mammalian Gene Collection (MGC).</title>
        <authorList>
            <consortium name="The MGC Project Team"/>
        </authorList>
    </citation>
    <scope>NUCLEOTIDE SEQUENCE [LARGE SCALE MRNA]</scope>
    <source>
        <tissue>Skin</tissue>
    </source>
</reference>
<feature type="chain" id="PRO_0000069181" description="B1 bradykinin receptor">
    <location>
        <begin position="1"/>
        <end position="353"/>
    </location>
</feature>
<feature type="topological domain" description="Extracellular" evidence="1">
    <location>
        <begin position="1"/>
        <end position="40"/>
    </location>
</feature>
<feature type="transmembrane region" description="Helical; Name=1" evidence="1">
    <location>
        <begin position="41"/>
        <end position="64"/>
    </location>
</feature>
<feature type="topological domain" description="Cytoplasmic" evidence="1">
    <location>
        <begin position="65"/>
        <end position="73"/>
    </location>
</feature>
<feature type="transmembrane region" description="Helical; Name=2" evidence="1">
    <location>
        <begin position="74"/>
        <end position="98"/>
    </location>
</feature>
<feature type="topological domain" description="Extracellular" evidence="1">
    <location>
        <begin position="99"/>
        <end position="111"/>
    </location>
</feature>
<feature type="transmembrane region" description="Helical; Name=3" evidence="1">
    <location>
        <begin position="112"/>
        <end position="133"/>
    </location>
</feature>
<feature type="topological domain" description="Cytoplasmic" evidence="1">
    <location>
        <begin position="134"/>
        <end position="155"/>
    </location>
</feature>
<feature type="transmembrane region" description="Helical; Name=4" evidence="1">
    <location>
        <begin position="156"/>
        <end position="178"/>
    </location>
</feature>
<feature type="topological domain" description="Extracellular" evidence="1">
    <location>
        <begin position="179"/>
        <end position="199"/>
    </location>
</feature>
<feature type="transmembrane region" description="Helical; Name=5" evidence="1">
    <location>
        <begin position="200"/>
        <end position="226"/>
    </location>
</feature>
<feature type="topological domain" description="Cytoplasmic" evidence="1">
    <location>
        <begin position="227"/>
        <end position="247"/>
    </location>
</feature>
<feature type="transmembrane region" description="Helical; Name=6" evidence="1">
    <location>
        <begin position="248"/>
        <end position="272"/>
    </location>
</feature>
<feature type="topological domain" description="Extracellular" evidence="1">
    <location>
        <begin position="273"/>
        <end position="291"/>
    </location>
</feature>
<feature type="transmembrane region" description="Helical; Name=7" evidence="1">
    <location>
        <begin position="292"/>
        <end position="314"/>
    </location>
</feature>
<feature type="topological domain" description="Cytoplasmic" evidence="1">
    <location>
        <begin position="315"/>
        <end position="353"/>
    </location>
</feature>
<feature type="lipid moiety-binding region" description="S-palmitoyl cysteine" evidence="1">
    <location>
        <position position="330"/>
    </location>
</feature>
<feature type="glycosylation site" description="N-linked (GlcNAc...) asparagine" evidence="1">
    <location>
        <position position="14"/>
    </location>
</feature>
<feature type="glycosylation site" description="N-linked (GlcNAc...) asparagine" evidence="1">
    <location>
        <position position="22"/>
    </location>
</feature>
<feature type="glycosylation site" description="N-linked (GlcNAc...) asparagine" evidence="1">
    <location>
        <position position="185"/>
    </location>
</feature>
<feature type="disulfide bond" evidence="2">
    <location>
        <begin position="110"/>
        <end position="189"/>
    </location>
</feature>
<feature type="sequence variant" id="VAR_014359" description="In dbSNP:rs2229459.">
    <original>A</original>
    <variation>V</variation>
    <location>
        <position position="250"/>
    </location>
</feature>
<feature type="sequence variant" id="VAR_049376" description="In dbSNP:rs8004609.">
    <original>R</original>
    <variation>Q</variation>
    <location>
        <position position="317"/>
    </location>
</feature>
<feature type="sequence conflict" description="In Ref. 1, 2 and 3." evidence="5" ref="1 2 3">
    <original>R</original>
    <variation>G</variation>
    <location>
        <position position="146"/>
    </location>
</feature>
<feature type="sequence conflict" description="In Ref. 1, 2 and 3." evidence="5" ref="1 2 3">
    <original>CGGR</original>
    <variation>VRGP</variation>
    <location>
        <begin position="240"/>
        <end position="243"/>
    </location>
</feature>
<feature type="sequence conflict" description="In Ref. 2." evidence="5" ref="2">
    <original>S</original>
    <variation>R</variation>
    <location>
        <position position="246"/>
    </location>
</feature>
<feature type="sequence conflict" description="In Ref. 2; AAC50594." evidence="5" ref="2">
    <original>F</original>
    <variation>S</variation>
    <location>
        <position position="259"/>
    </location>
</feature>
<feature type="helix" evidence="7">
    <location>
        <begin position="31"/>
        <end position="63"/>
    </location>
</feature>
<feature type="helix" evidence="7">
    <location>
        <begin position="71"/>
        <end position="88"/>
    </location>
</feature>
<feature type="helix" evidence="7">
    <location>
        <begin position="90"/>
        <end position="97"/>
    </location>
</feature>
<feature type="turn" evidence="7">
    <location>
        <begin position="98"/>
        <end position="101"/>
    </location>
</feature>
<feature type="helix" evidence="7">
    <location>
        <begin position="107"/>
        <end position="140"/>
    </location>
</feature>
<feature type="helix" evidence="7">
    <location>
        <begin position="144"/>
        <end position="147"/>
    </location>
</feature>
<feature type="helix" evidence="7">
    <location>
        <begin position="150"/>
        <end position="167"/>
    </location>
</feature>
<feature type="helix" evidence="7">
    <location>
        <begin position="170"/>
        <end position="175"/>
    </location>
</feature>
<feature type="strand" evidence="7">
    <location>
        <begin position="176"/>
        <end position="180"/>
    </location>
</feature>
<feature type="turn" evidence="7">
    <location>
        <begin position="182"/>
        <end position="184"/>
    </location>
</feature>
<feature type="strand" evidence="7">
    <location>
        <begin position="187"/>
        <end position="191"/>
    </location>
</feature>
<feature type="helix" evidence="7">
    <location>
        <begin position="197"/>
        <end position="210"/>
    </location>
</feature>
<feature type="helix" evidence="7">
    <location>
        <begin position="212"/>
        <end position="238"/>
    </location>
</feature>
<feature type="helix" evidence="7">
    <location>
        <begin position="247"/>
        <end position="277"/>
    </location>
</feature>
<feature type="helix" evidence="7">
    <location>
        <begin position="284"/>
        <end position="301"/>
    </location>
</feature>
<feature type="helix" evidence="7">
    <location>
        <begin position="303"/>
        <end position="312"/>
    </location>
</feature>
<feature type="turn" evidence="7">
    <location>
        <begin position="313"/>
        <end position="315"/>
    </location>
</feature>
<feature type="helix" evidence="7">
    <location>
        <begin position="317"/>
        <end position="324"/>
    </location>
</feature>
<feature type="turn" evidence="7">
    <location>
        <begin position="325"/>
        <end position="329"/>
    </location>
</feature>
<gene>
    <name type="primary">BDKRB1</name>
    <name type="synonym">BRADYB1</name>
</gene>
<organism>
    <name type="scientific">Homo sapiens</name>
    <name type="common">Human</name>
    <dbReference type="NCBI Taxonomy" id="9606"/>
    <lineage>
        <taxon>Eukaryota</taxon>
        <taxon>Metazoa</taxon>
        <taxon>Chordata</taxon>
        <taxon>Craniata</taxon>
        <taxon>Vertebrata</taxon>
        <taxon>Euteleostomi</taxon>
        <taxon>Mammalia</taxon>
        <taxon>Eutheria</taxon>
        <taxon>Euarchontoglires</taxon>
        <taxon>Primates</taxon>
        <taxon>Haplorrhini</taxon>
        <taxon>Catarrhini</taxon>
        <taxon>Hominidae</taxon>
        <taxon>Homo</taxon>
    </lineage>
</organism>